<organism>
    <name type="scientific">Coxiella burnetii (strain RSA 331 / Henzerling II)</name>
    <dbReference type="NCBI Taxonomy" id="360115"/>
    <lineage>
        <taxon>Bacteria</taxon>
        <taxon>Pseudomonadati</taxon>
        <taxon>Pseudomonadota</taxon>
        <taxon>Gammaproteobacteria</taxon>
        <taxon>Legionellales</taxon>
        <taxon>Coxiellaceae</taxon>
        <taxon>Coxiella</taxon>
    </lineage>
</organism>
<protein>
    <recommendedName>
        <fullName evidence="1">DNA mismatch repair protein MutL</fullName>
    </recommendedName>
</protein>
<accession>A9NCK3</accession>
<name>MUTL_COXBR</name>
<keyword id="KW-0227">DNA damage</keyword>
<keyword id="KW-0234">DNA repair</keyword>
<reference key="1">
    <citation type="submission" date="2007-11" db="EMBL/GenBank/DDBJ databases">
        <title>Genome sequencing of phylogenetically and phenotypically diverse Coxiella burnetii isolates.</title>
        <authorList>
            <person name="Seshadri R."/>
            <person name="Samuel J.E."/>
        </authorList>
    </citation>
    <scope>NUCLEOTIDE SEQUENCE [LARGE SCALE GENOMIC DNA]</scope>
    <source>
        <strain>RSA 331 / Henzerling II</strain>
    </source>
</reference>
<dbReference type="EMBL" id="CP000890">
    <property type="protein sequence ID" value="ABX78074.1"/>
    <property type="molecule type" value="Genomic_DNA"/>
</dbReference>
<dbReference type="SMR" id="A9NCK3"/>
<dbReference type="KEGG" id="cbs:COXBURSA331_A0845"/>
<dbReference type="HOGENOM" id="CLU_004131_4_2_6"/>
<dbReference type="GO" id="GO:0032300">
    <property type="term" value="C:mismatch repair complex"/>
    <property type="evidence" value="ECO:0007669"/>
    <property type="project" value="InterPro"/>
</dbReference>
<dbReference type="GO" id="GO:0005524">
    <property type="term" value="F:ATP binding"/>
    <property type="evidence" value="ECO:0007669"/>
    <property type="project" value="InterPro"/>
</dbReference>
<dbReference type="GO" id="GO:0016887">
    <property type="term" value="F:ATP hydrolysis activity"/>
    <property type="evidence" value="ECO:0007669"/>
    <property type="project" value="InterPro"/>
</dbReference>
<dbReference type="GO" id="GO:0140664">
    <property type="term" value="F:ATP-dependent DNA damage sensor activity"/>
    <property type="evidence" value="ECO:0007669"/>
    <property type="project" value="InterPro"/>
</dbReference>
<dbReference type="GO" id="GO:0030983">
    <property type="term" value="F:mismatched DNA binding"/>
    <property type="evidence" value="ECO:0007669"/>
    <property type="project" value="InterPro"/>
</dbReference>
<dbReference type="GO" id="GO:0006298">
    <property type="term" value="P:mismatch repair"/>
    <property type="evidence" value="ECO:0007669"/>
    <property type="project" value="UniProtKB-UniRule"/>
</dbReference>
<dbReference type="CDD" id="cd16926">
    <property type="entry name" value="HATPase_MutL-MLH-PMS-like"/>
    <property type="match status" value="1"/>
</dbReference>
<dbReference type="CDD" id="cd03482">
    <property type="entry name" value="MutL_Trans_MutL"/>
    <property type="match status" value="1"/>
</dbReference>
<dbReference type="FunFam" id="3.30.230.10:FF:000013">
    <property type="entry name" value="DNA mismatch repair endonuclease MutL"/>
    <property type="match status" value="1"/>
</dbReference>
<dbReference type="FunFam" id="3.30.565.10:FF:000003">
    <property type="entry name" value="DNA mismatch repair endonuclease MutL"/>
    <property type="match status" value="1"/>
</dbReference>
<dbReference type="Gene3D" id="3.30.230.10">
    <property type="match status" value="1"/>
</dbReference>
<dbReference type="Gene3D" id="3.30.565.10">
    <property type="entry name" value="Histidine kinase-like ATPase, C-terminal domain"/>
    <property type="match status" value="1"/>
</dbReference>
<dbReference type="Gene3D" id="3.30.1540.20">
    <property type="entry name" value="MutL, C-terminal domain, dimerisation subdomain"/>
    <property type="match status" value="1"/>
</dbReference>
<dbReference type="Gene3D" id="3.30.1370.100">
    <property type="entry name" value="MutL, C-terminal domain, regulatory subdomain"/>
    <property type="match status" value="1"/>
</dbReference>
<dbReference type="HAMAP" id="MF_00149">
    <property type="entry name" value="DNA_mis_repair"/>
    <property type="match status" value="1"/>
</dbReference>
<dbReference type="InterPro" id="IPR014762">
    <property type="entry name" value="DNA_mismatch_repair_CS"/>
</dbReference>
<dbReference type="InterPro" id="IPR020667">
    <property type="entry name" value="DNA_mismatch_repair_MutL"/>
</dbReference>
<dbReference type="InterPro" id="IPR013507">
    <property type="entry name" value="DNA_mismatch_S5_2-like"/>
</dbReference>
<dbReference type="InterPro" id="IPR036890">
    <property type="entry name" value="HATPase_C_sf"/>
</dbReference>
<dbReference type="InterPro" id="IPR002099">
    <property type="entry name" value="MutL/Mlh/PMS"/>
</dbReference>
<dbReference type="InterPro" id="IPR038973">
    <property type="entry name" value="MutL/Mlh/Pms-like"/>
</dbReference>
<dbReference type="InterPro" id="IPR014790">
    <property type="entry name" value="MutL_C"/>
</dbReference>
<dbReference type="InterPro" id="IPR042120">
    <property type="entry name" value="MutL_C_dimsub"/>
</dbReference>
<dbReference type="InterPro" id="IPR042121">
    <property type="entry name" value="MutL_C_regsub"/>
</dbReference>
<dbReference type="InterPro" id="IPR037198">
    <property type="entry name" value="MutL_C_sf"/>
</dbReference>
<dbReference type="InterPro" id="IPR020568">
    <property type="entry name" value="Ribosomal_Su5_D2-typ_SF"/>
</dbReference>
<dbReference type="InterPro" id="IPR014721">
    <property type="entry name" value="Ribsml_uS5_D2-typ_fold_subgr"/>
</dbReference>
<dbReference type="NCBIfam" id="TIGR00585">
    <property type="entry name" value="mutl"/>
    <property type="match status" value="1"/>
</dbReference>
<dbReference type="PANTHER" id="PTHR10073">
    <property type="entry name" value="DNA MISMATCH REPAIR PROTEIN MLH, PMS, MUTL"/>
    <property type="match status" value="1"/>
</dbReference>
<dbReference type="PANTHER" id="PTHR10073:SF12">
    <property type="entry name" value="DNA MISMATCH REPAIR PROTEIN MLH1"/>
    <property type="match status" value="1"/>
</dbReference>
<dbReference type="Pfam" id="PF01119">
    <property type="entry name" value="DNA_mis_repair"/>
    <property type="match status" value="1"/>
</dbReference>
<dbReference type="Pfam" id="PF13589">
    <property type="entry name" value="HATPase_c_3"/>
    <property type="match status" value="1"/>
</dbReference>
<dbReference type="Pfam" id="PF08676">
    <property type="entry name" value="MutL_C"/>
    <property type="match status" value="1"/>
</dbReference>
<dbReference type="SMART" id="SM01340">
    <property type="entry name" value="DNA_mis_repair"/>
    <property type="match status" value="1"/>
</dbReference>
<dbReference type="SMART" id="SM00853">
    <property type="entry name" value="MutL_C"/>
    <property type="match status" value="1"/>
</dbReference>
<dbReference type="SUPFAM" id="SSF55874">
    <property type="entry name" value="ATPase domain of HSP90 chaperone/DNA topoisomerase II/histidine kinase"/>
    <property type="match status" value="1"/>
</dbReference>
<dbReference type="SUPFAM" id="SSF118116">
    <property type="entry name" value="DNA mismatch repair protein MutL"/>
    <property type="match status" value="1"/>
</dbReference>
<dbReference type="SUPFAM" id="SSF54211">
    <property type="entry name" value="Ribosomal protein S5 domain 2-like"/>
    <property type="match status" value="1"/>
</dbReference>
<dbReference type="PROSITE" id="PS00058">
    <property type="entry name" value="DNA_MISMATCH_REPAIR_1"/>
    <property type="match status" value="1"/>
</dbReference>
<feature type="chain" id="PRO_1000076695" description="DNA mismatch repair protein MutL">
    <location>
        <begin position="1"/>
        <end position="574"/>
    </location>
</feature>
<comment type="function">
    <text evidence="1">This protein is involved in the repair of mismatches in DNA. It is required for dam-dependent methyl-directed DNA mismatch repair. May act as a 'molecular matchmaker', a protein that promotes the formation of a stable complex between two or more DNA-binding proteins in an ATP-dependent manner without itself being part of a final effector complex.</text>
</comment>
<comment type="similarity">
    <text evidence="1">Belongs to the DNA mismatch repair MutL/HexB family.</text>
</comment>
<evidence type="ECO:0000255" key="1">
    <source>
        <dbReference type="HAMAP-Rule" id="MF_00149"/>
    </source>
</evidence>
<gene>
    <name evidence="1" type="primary">mutL</name>
    <name type="ordered locus">COXBURSA331_A0845</name>
</gene>
<sequence length="574" mass="64586">MYIRRLNDQTANQIAAGEVVERPASVVKELIENSIDAHASCIRVDILQGGAKQIRIQDDGDGIHPEDLVLALERHATSKIAKIDDLQDITTLGFRGEALASISAVSRLTLTSRQKNAEMGYRISNISHKIMTPVPAAHPQGTTIDVQDLFYNTPARRKFLRSPATEFQHIRRIIERLALSHFTTEFLLHHNEKEIIHFKSATTISGQENRIKSILGDVFMQSALAIEFSQSGLTLKGYIAEAAYTRSQPDLQYIYVNGRFVRDKLVAQALRQAYHDVLFHGRHPAYVLYLEIDPAFVDINVHPTKHEVRFRDPQWVRDFLIHAVKTALAQAKPGIVHPLPQSTAEYNPITNFAPTPLIEGQGNLSLIQEQPAPYTQTIVHKHPLGHALAQLQGIYILSQNEKGLVIVDMHAAHERILYEKMKKQLAEVGLAMQSLLVPINLSLNPQEITAWQTNKALFARLGFEIESFGPDKIVVRRHPSLLKPKNLENLIRDVLADLITHNTTSRVGERINAALATLACHAALRAPHYLTIEEMEALLREMEKTEHGGLCNHGRPTWKQFDIAELDTFFLRGQ</sequence>
<proteinExistence type="inferred from homology"/>